<comment type="function">
    <text evidence="1">One of the primary rRNA binding proteins, it binds specifically to the 5'-end of 16S ribosomal RNA.</text>
</comment>
<comment type="subunit">
    <text evidence="1">Part of the 30S ribosomal subunit.</text>
</comment>
<comment type="similarity">
    <text evidence="1">Belongs to the universal ribosomal protein uS17 family.</text>
</comment>
<organism>
    <name type="scientific">Methylobacillus flagellatus (strain ATCC 51484 / DSM 6875 / VKM B-1610 / KT)</name>
    <dbReference type="NCBI Taxonomy" id="265072"/>
    <lineage>
        <taxon>Bacteria</taxon>
        <taxon>Pseudomonadati</taxon>
        <taxon>Pseudomonadota</taxon>
        <taxon>Betaproteobacteria</taxon>
        <taxon>Nitrosomonadales</taxon>
        <taxon>Methylophilaceae</taxon>
        <taxon>Methylobacillus</taxon>
    </lineage>
</organism>
<protein>
    <recommendedName>
        <fullName evidence="1">Small ribosomal subunit protein uS17</fullName>
    </recommendedName>
    <alternativeName>
        <fullName evidence="2">30S ribosomal protein S17</fullName>
    </alternativeName>
</protein>
<proteinExistence type="inferred from homology"/>
<reference key="1">
    <citation type="submission" date="2006-03" db="EMBL/GenBank/DDBJ databases">
        <title>Complete sequence of Methylobacillus flagellatus KT.</title>
        <authorList>
            <consortium name="US DOE Joint Genome Institute"/>
            <person name="Copeland A."/>
            <person name="Lucas S."/>
            <person name="Lapidus A."/>
            <person name="Barry K."/>
            <person name="Detter J.C."/>
            <person name="Glavina del Rio T."/>
            <person name="Hammon N."/>
            <person name="Israni S."/>
            <person name="Dalin E."/>
            <person name="Tice H."/>
            <person name="Pitluck S."/>
            <person name="Brettin T."/>
            <person name="Bruce D."/>
            <person name="Han C."/>
            <person name="Tapia R."/>
            <person name="Saunders E."/>
            <person name="Gilna P."/>
            <person name="Schmutz J."/>
            <person name="Larimer F."/>
            <person name="Land M."/>
            <person name="Kyrpides N."/>
            <person name="Anderson I."/>
            <person name="Richardson P."/>
        </authorList>
    </citation>
    <scope>NUCLEOTIDE SEQUENCE [LARGE SCALE GENOMIC DNA]</scope>
    <source>
        <strain>ATCC 51484 / DSM 6875 / VKM B-1610 / KT</strain>
    </source>
</reference>
<dbReference type="EMBL" id="CP000284">
    <property type="protein sequence ID" value="ABE48559.1"/>
    <property type="molecule type" value="Genomic_DNA"/>
</dbReference>
<dbReference type="RefSeq" id="WP_011478656.1">
    <property type="nucleotide sequence ID" value="NC_007947.1"/>
</dbReference>
<dbReference type="SMR" id="Q1H4M8"/>
<dbReference type="STRING" id="265072.Mfla_0288"/>
<dbReference type="KEGG" id="mfa:Mfla_0288"/>
<dbReference type="eggNOG" id="COG0186">
    <property type="taxonomic scope" value="Bacteria"/>
</dbReference>
<dbReference type="HOGENOM" id="CLU_073626_1_1_4"/>
<dbReference type="OrthoDB" id="9811714at2"/>
<dbReference type="Proteomes" id="UP000002440">
    <property type="component" value="Chromosome"/>
</dbReference>
<dbReference type="GO" id="GO:0022627">
    <property type="term" value="C:cytosolic small ribosomal subunit"/>
    <property type="evidence" value="ECO:0007669"/>
    <property type="project" value="TreeGrafter"/>
</dbReference>
<dbReference type="GO" id="GO:0019843">
    <property type="term" value="F:rRNA binding"/>
    <property type="evidence" value="ECO:0007669"/>
    <property type="project" value="UniProtKB-UniRule"/>
</dbReference>
<dbReference type="GO" id="GO:0003735">
    <property type="term" value="F:structural constituent of ribosome"/>
    <property type="evidence" value="ECO:0007669"/>
    <property type="project" value="InterPro"/>
</dbReference>
<dbReference type="GO" id="GO:0006412">
    <property type="term" value="P:translation"/>
    <property type="evidence" value="ECO:0007669"/>
    <property type="project" value="UniProtKB-UniRule"/>
</dbReference>
<dbReference type="CDD" id="cd00364">
    <property type="entry name" value="Ribosomal_uS17"/>
    <property type="match status" value="1"/>
</dbReference>
<dbReference type="Gene3D" id="2.40.50.140">
    <property type="entry name" value="Nucleic acid-binding proteins"/>
    <property type="match status" value="1"/>
</dbReference>
<dbReference type="HAMAP" id="MF_01345_B">
    <property type="entry name" value="Ribosomal_uS17_B"/>
    <property type="match status" value="1"/>
</dbReference>
<dbReference type="InterPro" id="IPR012340">
    <property type="entry name" value="NA-bd_OB-fold"/>
</dbReference>
<dbReference type="InterPro" id="IPR000266">
    <property type="entry name" value="Ribosomal_uS17"/>
</dbReference>
<dbReference type="InterPro" id="IPR019984">
    <property type="entry name" value="Ribosomal_uS17_bact/chlr"/>
</dbReference>
<dbReference type="InterPro" id="IPR019979">
    <property type="entry name" value="Ribosomal_uS17_CS"/>
</dbReference>
<dbReference type="NCBIfam" id="NF004123">
    <property type="entry name" value="PRK05610.1"/>
    <property type="match status" value="1"/>
</dbReference>
<dbReference type="NCBIfam" id="TIGR03635">
    <property type="entry name" value="uS17_bact"/>
    <property type="match status" value="1"/>
</dbReference>
<dbReference type="PANTHER" id="PTHR10744">
    <property type="entry name" value="40S RIBOSOMAL PROTEIN S11 FAMILY MEMBER"/>
    <property type="match status" value="1"/>
</dbReference>
<dbReference type="PANTHER" id="PTHR10744:SF1">
    <property type="entry name" value="SMALL RIBOSOMAL SUBUNIT PROTEIN US17M"/>
    <property type="match status" value="1"/>
</dbReference>
<dbReference type="Pfam" id="PF00366">
    <property type="entry name" value="Ribosomal_S17"/>
    <property type="match status" value="1"/>
</dbReference>
<dbReference type="PRINTS" id="PR00973">
    <property type="entry name" value="RIBOSOMALS17"/>
</dbReference>
<dbReference type="SUPFAM" id="SSF50249">
    <property type="entry name" value="Nucleic acid-binding proteins"/>
    <property type="match status" value="1"/>
</dbReference>
<dbReference type="PROSITE" id="PS00056">
    <property type="entry name" value="RIBOSOMAL_S17"/>
    <property type="match status" value="1"/>
</dbReference>
<keyword id="KW-1185">Reference proteome</keyword>
<keyword id="KW-0687">Ribonucleoprotein</keyword>
<keyword id="KW-0689">Ribosomal protein</keyword>
<keyword id="KW-0694">RNA-binding</keyword>
<keyword id="KW-0699">rRNA-binding</keyword>
<feature type="chain" id="PRO_0000255686" description="Small ribosomal subunit protein uS17">
    <location>
        <begin position="1"/>
        <end position="90"/>
    </location>
</feature>
<gene>
    <name evidence="1" type="primary">rpsQ</name>
    <name type="ordered locus">Mfla_0288</name>
</gene>
<sequence>MSENQTEKLVRTLSGRVVSDKMDKTVTVLVERKVKHPLIGKVVRRSNKFHAHDENNECKEGDLVMIEESRPLSKTKTWRVSKIVEKARIV</sequence>
<evidence type="ECO:0000255" key="1">
    <source>
        <dbReference type="HAMAP-Rule" id="MF_01345"/>
    </source>
</evidence>
<evidence type="ECO:0000305" key="2"/>
<name>RS17_METFK</name>
<accession>Q1H4M8</accession>